<reference key="1">
    <citation type="submission" date="2008-05" db="EMBL/GenBank/DDBJ databases">
        <title>Complete genome sequence of Clostridium botulinum E3 str. Alaska E43.</title>
        <authorList>
            <person name="Brinkac L.M."/>
            <person name="Brown J.L."/>
            <person name="Bruce D."/>
            <person name="Detter C."/>
            <person name="Munk C."/>
            <person name="Smith L.A."/>
            <person name="Smith T.J."/>
            <person name="Sutton G."/>
            <person name="Brettin T.S."/>
        </authorList>
    </citation>
    <scope>NUCLEOTIDE SEQUENCE [LARGE SCALE GENOMIC DNA]</scope>
    <source>
        <strain>Alaska E43 / Type E3</strain>
    </source>
</reference>
<accession>B2V2P4</accession>
<name>KDPC_CLOBA</name>
<dbReference type="EMBL" id="CP001078">
    <property type="protein sequence ID" value="ACD52932.1"/>
    <property type="molecule type" value="Genomic_DNA"/>
</dbReference>
<dbReference type="RefSeq" id="WP_012450954.1">
    <property type="nucleotide sequence ID" value="NC_010723.1"/>
</dbReference>
<dbReference type="SMR" id="B2V2P4"/>
<dbReference type="KEGG" id="cbt:CLH_0917"/>
<dbReference type="HOGENOM" id="CLU_077094_2_0_9"/>
<dbReference type="GO" id="GO:0005886">
    <property type="term" value="C:plasma membrane"/>
    <property type="evidence" value="ECO:0007669"/>
    <property type="project" value="UniProtKB-SubCell"/>
</dbReference>
<dbReference type="GO" id="GO:0005524">
    <property type="term" value="F:ATP binding"/>
    <property type="evidence" value="ECO:0007669"/>
    <property type="project" value="UniProtKB-UniRule"/>
</dbReference>
<dbReference type="GO" id="GO:0008556">
    <property type="term" value="F:P-type potassium transmembrane transporter activity"/>
    <property type="evidence" value="ECO:0007669"/>
    <property type="project" value="InterPro"/>
</dbReference>
<dbReference type="HAMAP" id="MF_00276">
    <property type="entry name" value="KdpC"/>
    <property type="match status" value="1"/>
</dbReference>
<dbReference type="InterPro" id="IPR003820">
    <property type="entry name" value="KdpC"/>
</dbReference>
<dbReference type="NCBIfam" id="TIGR00681">
    <property type="entry name" value="kdpC"/>
    <property type="match status" value="1"/>
</dbReference>
<dbReference type="NCBIfam" id="NF001454">
    <property type="entry name" value="PRK00315.1"/>
    <property type="match status" value="1"/>
</dbReference>
<dbReference type="PANTHER" id="PTHR30042">
    <property type="entry name" value="POTASSIUM-TRANSPORTING ATPASE C CHAIN"/>
    <property type="match status" value="1"/>
</dbReference>
<dbReference type="PANTHER" id="PTHR30042:SF2">
    <property type="entry name" value="POTASSIUM-TRANSPORTING ATPASE KDPC SUBUNIT"/>
    <property type="match status" value="1"/>
</dbReference>
<dbReference type="Pfam" id="PF02669">
    <property type="entry name" value="KdpC"/>
    <property type="match status" value="1"/>
</dbReference>
<dbReference type="PIRSF" id="PIRSF001296">
    <property type="entry name" value="K_ATPase_KdpC"/>
    <property type="match status" value="1"/>
</dbReference>
<evidence type="ECO:0000255" key="1">
    <source>
        <dbReference type="HAMAP-Rule" id="MF_00276"/>
    </source>
</evidence>
<protein>
    <recommendedName>
        <fullName evidence="1">Potassium-transporting ATPase KdpC subunit</fullName>
    </recommendedName>
    <alternativeName>
        <fullName evidence="1">ATP phosphohydrolase [potassium-transporting] C chain</fullName>
    </alternativeName>
    <alternativeName>
        <fullName evidence="1">Potassium-binding and translocating subunit C</fullName>
    </alternativeName>
    <alternativeName>
        <fullName evidence="1">Potassium-translocating ATPase C chain</fullName>
    </alternativeName>
</protein>
<keyword id="KW-0067">ATP-binding</keyword>
<keyword id="KW-1003">Cell membrane</keyword>
<keyword id="KW-0406">Ion transport</keyword>
<keyword id="KW-0472">Membrane</keyword>
<keyword id="KW-0547">Nucleotide-binding</keyword>
<keyword id="KW-0630">Potassium</keyword>
<keyword id="KW-0633">Potassium transport</keyword>
<keyword id="KW-0812">Transmembrane</keyword>
<keyword id="KW-1133">Transmembrane helix</keyword>
<keyword id="KW-0813">Transport</keyword>
<gene>
    <name evidence="1" type="primary">kdpC</name>
    <name type="ordered locus">CLH_0917</name>
</gene>
<sequence length="201" mass="22275">MKEFKAVFPKALIIFIIFTILCGGIYTIFITGISQLIFPKQANGSIIEVNGKKYGSVLLAQQYNDEKHLWGRIMNIDTNTFVDENGKKLAYSAPSNLSPASKEYEALVQERVDKIKENHPEQDEQAIPVDLVTCSGSGLDPHISVAAAKYQINRIAKNNNMEVKDVENIIDKYTSGKLFGVLGEKTVNVLEVNLAIDGILK</sequence>
<proteinExistence type="inferred from homology"/>
<comment type="function">
    <text evidence="1">Part of the high-affinity ATP-driven potassium transport (or Kdp) system, which catalyzes the hydrolysis of ATP coupled with the electrogenic transport of potassium into the cytoplasm. This subunit acts as a catalytic chaperone that increases the ATP-binding affinity of the ATP-hydrolyzing subunit KdpB by the formation of a transient KdpB/KdpC/ATP ternary complex.</text>
</comment>
<comment type="subunit">
    <text evidence="1">The system is composed of three essential subunits: KdpA, KdpB and KdpC.</text>
</comment>
<comment type="subcellular location">
    <subcellularLocation>
        <location evidence="1">Cell membrane</location>
        <topology evidence="1">Single-pass membrane protein</topology>
    </subcellularLocation>
</comment>
<comment type="similarity">
    <text evidence="1">Belongs to the KdpC family.</text>
</comment>
<organism>
    <name type="scientific">Clostridium botulinum (strain Alaska E43 / Type E3)</name>
    <dbReference type="NCBI Taxonomy" id="508767"/>
    <lineage>
        <taxon>Bacteria</taxon>
        <taxon>Bacillati</taxon>
        <taxon>Bacillota</taxon>
        <taxon>Clostridia</taxon>
        <taxon>Eubacteriales</taxon>
        <taxon>Clostridiaceae</taxon>
        <taxon>Clostridium</taxon>
    </lineage>
</organism>
<feature type="chain" id="PRO_1000114719" description="Potassium-transporting ATPase KdpC subunit">
    <location>
        <begin position="1"/>
        <end position="201"/>
    </location>
</feature>
<feature type="transmembrane region" description="Helical" evidence="1">
    <location>
        <begin position="13"/>
        <end position="33"/>
    </location>
</feature>